<gene>
    <name type="ordered locus">At5g53140</name>
    <name type="ORF">MFH8.8</name>
</gene>
<organism>
    <name type="scientific">Arabidopsis thaliana</name>
    <name type="common">Mouse-ear cress</name>
    <dbReference type="NCBI Taxonomy" id="3702"/>
    <lineage>
        <taxon>Eukaryota</taxon>
        <taxon>Viridiplantae</taxon>
        <taxon>Streptophyta</taxon>
        <taxon>Embryophyta</taxon>
        <taxon>Tracheophyta</taxon>
        <taxon>Spermatophyta</taxon>
        <taxon>Magnoliopsida</taxon>
        <taxon>eudicotyledons</taxon>
        <taxon>Gunneridae</taxon>
        <taxon>Pentapetalae</taxon>
        <taxon>rosids</taxon>
        <taxon>malvids</taxon>
        <taxon>Brassicales</taxon>
        <taxon>Brassicaceae</taxon>
        <taxon>Camelineae</taxon>
        <taxon>Arabidopsis</taxon>
    </lineage>
</organism>
<comment type="catalytic activity">
    <reaction>
        <text>O-phospho-L-seryl-[protein] + H2O = L-seryl-[protein] + phosphate</text>
        <dbReference type="Rhea" id="RHEA:20629"/>
        <dbReference type="Rhea" id="RHEA-COMP:9863"/>
        <dbReference type="Rhea" id="RHEA-COMP:11604"/>
        <dbReference type="ChEBI" id="CHEBI:15377"/>
        <dbReference type="ChEBI" id="CHEBI:29999"/>
        <dbReference type="ChEBI" id="CHEBI:43474"/>
        <dbReference type="ChEBI" id="CHEBI:83421"/>
        <dbReference type="EC" id="3.1.3.16"/>
    </reaction>
</comment>
<comment type="catalytic activity">
    <reaction>
        <text>O-phospho-L-threonyl-[protein] + H2O = L-threonyl-[protein] + phosphate</text>
        <dbReference type="Rhea" id="RHEA:47004"/>
        <dbReference type="Rhea" id="RHEA-COMP:11060"/>
        <dbReference type="Rhea" id="RHEA-COMP:11605"/>
        <dbReference type="ChEBI" id="CHEBI:15377"/>
        <dbReference type="ChEBI" id="CHEBI:30013"/>
        <dbReference type="ChEBI" id="CHEBI:43474"/>
        <dbReference type="ChEBI" id="CHEBI:61977"/>
        <dbReference type="EC" id="3.1.3.16"/>
    </reaction>
</comment>
<comment type="cofactor">
    <cofactor evidence="1">
        <name>Mg(2+)</name>
        <dbReference type="ChEBI" id="CHEBI:18420"/>
    </cofactor>
    <cofactor evidence="1">
        <name>Mn(2+)</name>
        <dbReference type="ChEBI" id="CHEBI:29035"/>
    </cofactor>
    <text evidence="1">Binds 2 magnesium or manganese ions per subunit.</text>
</comment>
<comment type="similarity">
    <text evidence="4">Belongs to the PP2C family.</text>
</comment>
<comment type="sequence caution" evidence="4">
    <conflict type="erroneous gene model prediction">
        <sequence resource="EMBL-CDS" id="BAB08417"/>
    </conflict>
</comment>
<feature type="chain" id="PRO_0000367996" description="Probable protein phosphatase 2C 76">
    <location>
        <begin position="1"/>
        <end position="420"/>
    </location>
</feature>
<feature type="domain" description="PPM-type phosphatase" evidence="2">
    <location>
        <begin position="101"/>
        <end position="347"/>
    </location>
</feature>
<feature type="region of interest" description="Disordered" evidence="3">
    <location>
        <begin position="353"/>
        <end position="420"/>
    </location>
</feature>
<feature type="compositionally biased region" description="Basic and acidic residues" evidence="3">
    <location>
        <begin position="403"/>
        <end position="420"/>
    </location>
</feature>
<feature type="binding site" evidence="1">
    <location>
        <position position="137"/>
    </location>
    <ligand>
        <name>Mn(2+)</name>
        <dbReference type="ChEBI" id="CHEBI:29035"/>
        <label>1</label>
    </ligand>
</feature>
<feature type="binding site" evidence="1">
    <location>
        <position position="137"/>
    </location>
    <ligand>
        <name>Mn(2+)</name>
        <dbReference type="ChEBI" id="CHEBI:29035"/>
        <label>2</label>
    </ligand>
</feature>
<feature type="binding site" evidence="1">
    <location>
        <position position="138"/>
    </location>
    <ligand>
        <name>Mn(2+)</name>
        <dbReference type="ChEBI" id="CHEBI:29035"/>
        <label>1</label>
    </ligand>
</feature>
<feature type="binding site" evidence="1">
    <location>
        <position position="299"/>
    </location>
    <ligand>
        <name>Mn(2+)</name>
        <dbReference type="ChEBI" id="CHEBI:29035"/>
        <label>2</label>
    </ligand>
</feature>
<feature type="binding site" evidence="1">
    <location>
        <position position="338"/>
    </location>
    <ligand>
        <name>Mn(2+)</name>
        <dbReference type="ChEBI" id="CHEBI:29035"/>
        <label>2</label>
    </ligand>
</feature>
<feature type="sequence conflict" description="In Ref. 3; AAM91486/AAL57666." evidence="4" ref="3">
    <original>F</original>
    <variation>L</variation>
    <location>
        <position position="267"/>
    </location>
</feature>
<name>P2C76_ARATH</name>
<evidence type="ECO:0000250" key="1"/>
<evidence type="ECO:0000255" key="2">
    <source>
        <dbReference type="PROSITE-ProRule" id="PRU01082"/>
    </source>
</evidence>
<evidence type="ECO:0000256" key="3">
    <source>
        <dbReference type="SAM" id="MobiDB-lite"/>
    </source>
</evidence>
<evidence type="ECO:0000305" key="4"/>
<accession>Q94AT1</accession>
<accession>Q8VZD9</accession>
<accession>Q9FGM3</accession>
<proteinExistence type="evidence at transcript level"/>
<sequence>MVCSSFIRSFIVQAGCRIGVLAQGRHQFIHIKKTLSVGFGFRTSVIGFRTTSGIGFRTSAKMMVDTSAGEKRISLVDMPPEKVDDGGYIGGGWKNDDGSLSCGYCSFRGKRSTMEDFYDIKASTIEGQAVCMFGIFDGHGGSRAAEYLKEHLFNNLMKHPQFLTDTKLALNETYKQTDVAFLESEKDTYRDDGSTASAAVLVGNHLYVANVGDSRTIVSKAGKAIALSDDHKPNRSDERKRIESAGGVIMWAGTWRVGGVLAMSRAFGNRMLKQFVVAEPEIQDLEIDHEAELLVLASDGLWDVVPNEDAVALAQSEEEPEAAARKLTDTAFSRGSADNITCIVVKFRHDKTESPKIETNAMAESEPELNPTTELEPESNPSTALETESIPKAELESEPDAIPDPKPETEPETKGEKAGE</sequence>
<keyword id="KW-0378">Hydrolase</keyword>
<keyword id="KW-0460">Magnesium</keyword>
<keyword id="KW-0464">Manganese</keyword>
<keyword id="KW-0479">Metal-binding</keyword>
<keyword id="KW-0904">Protein phosphatase</keyword>
<keyword id="KW-1185">Reference proteome</keyword>
<dbReference type="EC" id="3.1.3.16"/>
<dbReference type="EMBL" id="AB025622">
    <property type="protein sequence ID" value="BAB08417.1"/>
    <property type="status" value="ALT_SEQ"/>
    <property type="molecule type" value="Genomic_DNA"/>
</dbReference>
<dbReference type="EMBL" id="CP002688">
    <property type="protein sequence ID" value="AED96312.1"/>
    <property type="molecule type" value="Genomic_DNA"/>
</dbReference>
<dbReference type="EMBL" id="CP002688">
    <property type="protein sequence ID" value="ANM68199.1"/>
    <property type="molecule type" value="Genomic_DNA"/>
</dbReference>
<dbReference type="EMBL" id="AY045819">
    <property type="protein sequence ID" value="AAK76493.1"/>
    <property type="molecule type" value="mRNA"/>
</dbReference>
<dbReference type="EMBL" id="AY065026">
    <property type="protein sequence ID" value="AAL57666.1"/>
    <property type="molecule type" value="mRNA"/>
</dbReference>
<dbReference type="EMBL" id="AY091360">
    <property type="protein sequence ID" value="AAM14299.1"/>
    <property type="molecule type" value="mRNA"/>
</dbReference>
<dbReference type="EMBL" id="AY133656">
    <property type="protein sequence ID" value="AAM91486.1"/>
    <property type="molecule type" value="mRNA"/>
</dbReference>
<dbReference type="RefSeq" id="NP_001329972.1">
    <property type="nucleotide sequence ID" value="NM_001345034.1"/>
</dbReference>
<dbReference type="RefSeq" id="NP_568786.1">
    <property type="nucleotide sequence ID" value="NM_124693.4"/>
</dbReference>
<dbReference type="SMR" id="Q94AT1"/>
<dbReference type="BioGRID" id="20640">
    <property type="interactions" value="4"/>
</dbReference>
<dbReference type="FunCoup" id="Q94AT1">
    <property type="interactions" value="2221"/>
</dbReference>
<dbReference type="IntAct" id="Q94AT1">
    <property type="interactions" value="2"/>
</dbReference>
<dbReference type="MINT" id="Q94AT1"/>
<dbReference type="STRING" id="3702.Q94AT1"/>
<dbReference type="iPTMnet" id="Q94AT1"/>
<dbReference type="MetOSite" id="Q94AT1"/>
<dbReference type="PaxDb" id="3702-AT5G53140.1"/>
<dbReference type="ProteomicsDB" id="250974"/>
<dbReference type="EnsemblPlants" id="AT5G53140.1">
    <property type="protein sequence ID" value="AT5G53140.1"/>
    <property type="gene ID" value="AT5G53140"/>
</dbReference>
<dbReference type="EnsemblPlants" id="AT5G53140.2">
    <property type="protein sequence ID" value="AT5G53140.2"/>
    <property type="gene ID" value="AT5G53140"/>
</dbReference>
<dbReference type="GeneID" id="835395"/>
<dbReference type="Gramene" id="AT5G53140.1">
    <property type="protein sequence ID" value="AT5G53140.1"/>
    <property type="gene ID" value="AT5G53140"/>
</dbReference>
<dbReference type="Gramene" id="AT5G53140.2">
    <property type="protein sequence ID" value="AT5G53140.2"/>
    <property type="gene ID" value="AT5G53140"/>
</dbReference>
<dbReference type="KEGG" id="ath:AT5G53140"/>
<dbReference type="Araport" id="AT5G53140"/>
<dbReference type="TAIR" id="AT5G53140"/>
<dbReference type="eggNOG" id="KOG0698">
    <property type="taxonomic scope" value="Eukaryota"/>
</dbReference>
<dbReference type="HOGENOM" id="CLU_013173_0_6_1"/>
<dbReference type="InParanoid" id="Q94AT1"/>
<dbReference type="OMA" id="KICIRSV"/>
<dbReference type="OrthoDB" id="10264738at2759"/>
<dbReference type="PhylomeDB" id="Q94AT1"/>
<dbReference type="PRO" id="PR:Q94AT1"/>
<dbReference type="Proteomes" id="UP000006548">
    <property type="component" value="Chromosome 5"/>
</dbReference>
<dbReference type="ExpressionAtlas" id="Q94AT1">
    <property type="expression patterns" value="baseline and differential"/>
</dbReference>
<dbReference type="GO" id="GO:0005829">
    <property type="term" value="C:cytosol"/>
    <property type="evidence" value="ECO:0007005"/>
    <property type="project" value="TAIR"/>
</dbReference>
<dbReference type="GO" id="GO:0009536">
    <property type="term" value="C:plastid"/>
    <property type="evidence" value="ECO:0007005"/>
    <property type="project" value="TAIR"/>
</dbReference>
<dbReference type="GO" id="GO:0046872">
    <property type="term" value="F:metal ion binding"/>
    <property type="evidence" value="ECO:0007669"/>
    <property type="project" value="UniProtKB-KW"/>
</dbReference>
<dbReference type="GO" id="GO:0004722">
    <property type="term" value="F:protein serine/threonine phosphatase activity"/>
    <property type="evidence" value="ECO:0007669"/>
    <property type="project" value="UniProtKB-EC"/>
</dbReference>
<dbReference type="CDD" id="cd00143">
    <property type="entry name" value="PP2Cc"/>
    <property type="match status" value="1"/>
</dbReference>
<dbReference type="FunFam" id="3.60.40.10:FF:000027">
    <property type="entry name" value="Probable protein phosphatase 2C 76"/>
    <property type="match status" value="1"/>
</dbReference>
<dbReference type="Gene3D" id="3.60.40.10">
    <property type="entry name" value="PPM-type phosphatase domain"/>
    <property type="match status" value="1"/>
</dbReference>
<dbReference type="InterPro" id="IPR015655">
    <property type="entry name" value="PP2C"/>
</dbReference>
<dbReference type="InterPro" id="IPR000222">
    <property type="entry name" value="PP2C_BS"/>
</dbReference>
<dbReference type="InterPro" id="IPR036457">
    <property type="entry name" value="PPM-type-like_dom_sf"/>
</dbReference>
<dbReference type="InterPro" id="IPR001932">
    <property type="entry name" value="PPM-type_phosphatase-like_dom"/>
</dbReference>
<dbReference type="PANTHER" id="PTHR47992">
    <property type="entry name" value="PROTEIN PHOSPHATASE"/>
    <property type="match status" value="1"/>
</dbReference>
<dbReference type="Pfam" id="PF00481">
    <property type="entry name" value="PP2C"/>
    <property type="match status" value="1"/>
</dbReference>
<dbReference type="SMART" id="SM00331">
    <property type="entry name" value="PP2C_SIG"/>
    <property type="match status" value="1"/>
</dbReference>
<dbReference type="SMART" id="SM00332">
    <property type="entry name" value="PP2Cc"/>
    <property type="match status" value="1"/>
</dbReference>
<dbReference type="SUPFAM" id="SSF81606">
    <property type="entry name" value="PP2C-like"/>
    <property type="match status" value="1"/>
</dbReference>
<dbReference type="PROSITE" id="PS01032">
    <property type="entry name" value="PPM_1"/>
    <property type="match status" value="1"/>
</dbReference>
<dbReference type="PROSITE" id="PS51746">
    <property type="entry name" value="PPM_2"/>
    <property type="match status" value="1"/>
</dbReference>
<reference key="1">
    <citation type="submission" date="1999-04" db="EMBL/GenBank/DDBJ databases">
        <title>Structural analysis of Arabidopsis thaliana chromosome 5. XI.</title>
        <authorList>
            <person name="Kaneko T."/>
            <person name="Katoh T."/>
            <person name="Asamizu E."/>
            <person name="Sato S."/>
            <person name="Nakamura Y."/>
            <person name="Kotani H."/>
            <person name="Tabata S."/>
        </authorList>
    </citation>
    <scope>NUCLEOTIDE SEQUENCE [LARGE SCALE GENOMIC DNA]</scope>
    <source>
        <strain>cv. Columbia</strain>
    </source>
</reference>
<reference key="2">
    <citation type="journal article" date="2017" name="Plant J.">
        <title>Araport11: a complete reannotation of the Arabidopsis thaliana reference genome.</title>
        <authorList>
            <person name="Cheng C.Y."/>
            <person name="Krishnakumar V."/>
            <person name="Chan A.P."/>
            <person name="Thibaud-Nissen F."/>
            <person name="Schobel S."/>
            <person name="Town C.D."/>
        </authorList>
    </citation>
    <scope>GENOME REANNOTATION</scope>
    <source>
        <strain>cv. Columbia</strain>
    </source>
</reference>
<reference key="3">
    <citation type="journal article" date="2003" name="Science">
        <title>Empirical analysis of transcriptional activity in the Arabidopsis genome.</title>
        <authorList>
            <person name="Yamada K."/>
            <person name="Lim J."/>
            <person name="Dale J.M."/>
            <person name="Chen H."/>
            <person name="Shinn P."/>
            <person name="Palm C.J."/>
            <person name="Southwick A.M."/>
            <person name="Wu H.C."/>
            <person name="Kim C.J."/>
            <person name="Nguyen M."/>
            <person name="Pham P.K."/>
            <person name="Cheuk R.F."/>
            <person name="Karlin-Newmann G."/>
            <person name="Liu S.X."/>
            <person name="Lam B."/>
            <person name="Sakano H."/>
            <person name="Wu T."/>
            <person name="Yu G."/>
            <person name="Miranda M."/>
            <person name="Quach H.L."/>
            <person name="Tripp M."/>
            <person name="Chang C.H."/>
            <person name="Lee J.M."/>
            <person name="Toriumi M.J."/>
            <person name="Chan M.M."/>
            <person name="Tang C.C."/>
            <person name="Onodera C.S."/>
            <person name="Deng J.M."/>
            <person name="Akiyama K."/>
            <person name="Ansari Y."/>
            <person name="Arakawa T."/>
            <person name="Banh J."/>
            <person name="Banno F."/>
            <person name="Bowser L."/>
            <person name="Brooks S.Y."/>
            <person name="Carninci P."/>
            <person name="Chao Q."/>
            <person name="Choy N."/>
            <person name="Enju A."/>
            <person name="Goldsmith A.D."/>
            <person name="Gurjal M."/>
            <person name="Hansen N.F."/>
            <person name="Hayashizaki Y."/>
            <person name="Johnson-Hopson C."/>
            <person name="Hsuan V.W."/>
            <person name="Iida K."/>
            <person name="Karnes M."/>
            <person name="Khan S."/>
            <person name="Koesema E."/>
            <person name="Ishida J."/>
            <person name="Jiang P.X."/>
            <person name="Jones T."/>
            <person name="Kawai J."/>
            <person name="Kamiya A."/>
            <person name="Meyers C."/>
            <person name="Nakajima M."/>
            <person name="Narusaka M."/>
            <person name="Seki M."/>
            <person name="Sakurai T."/>
            <person name="Satou M."/>
            <person name="Tamse R."/>
            <person name="Vaysberg M."/>
            <person name="Wallender E.K."/>
            <person name="Wong C."/>
            <person name="Yamamura Y."/>
            <person name="Yuan S."/>
            <person name="Shinozaki K."/>
            <person name="Davis R.W."/>
            <person name="Theologis A."/>
            <person name="Ecker J.R."/>
        </authorList>
    </citation>
    <scope>NUCLEOTIDE SEQUENCE [LARGE SCALE MRNA]</scope>
    <source>
        <strain>cv. Columbia</strain>
    </source>
</reference>
<reference key="4">
    <citation type="journal article" date="2008" name="BMC Genomics">
        <title>Genome-wide and expression analysis of protein phosphatase 2C in rice and Arabidopsis.</title>
        <authorList>
            <person name="Xue T."/>
            <person name="Wang D."/>
            <person name="Zhang S."/>
            <person name="Ehlting J."/>
            <person name="Ni F."/>
            <person name="Jacab S."/>
            <person name="Zheng C."/>
            <person name="Zhong Y."/>
        </authorList>
    </citation>
    <scope>GENE FAMILY</scope>
    <scope>NOMENCLATURE</scope>
</reference>
<protein>
    <recommendedName>
        <fullName>Probable protein phosphatase 2C 76</fullName>
        <shortName>AtPP2C76</shortName>
        <ecNumber>3.1.3.16</ecNumber>
    </recommendedName>
</protein>